<sequence>MADKITSRSQDYSQWYIDLVRSAKLADYSDVRGCMVIRPNGYAIWEKMQAALDAMFKETGHVNAYFPLFIPESYIAKEAEHIEGFAPECAVVTHGGGEELAEKLYVRPTSETIIWASYKKWIQSYRDLPILINQWANVVRWEMRTRLFLRTTEFLWQEGHTAHATKEEASEEVLRMITIYKKFAEEYMALPVIMGRKTESEKFAGADETFCIEAMMQDGKALQAGTSHHLGQNFAKAFDCQFQTSAGELDFVWATSWGVSTRLIGALIMAHSDDRGLVLPPKLASRQVVVIPILRGDKTAVLEQADAIVCTLKKHGIPAFVDSSDQNSPGWKFAEYELQGIPLRIELGPRDLAGKKCVVARRDTLEKTELPLDDTFSMQVSEILNSIQQNLYDRALSFRNEKTVEVKSYEEFKTAVENGFVIAHWDGTDETESKIKEETKATIRVLPEEQEYLDRYTMMEPGVCIYSGRPAARKVVFAKAY</sequence>
<name>SYP_CHLL2</name>
<reference key="1">
    <citation type="submission" date="2008-05" db="EMBL/GenBank/DDBJ databases">
        <title>Complete sequence of Chlorobium limicola DSM 245.</title>
        <authorList>
            <consortium name="US DOE Joint Genome Institute"/>
            <person name="Lucas S."/>
            <person name="Copeland A."/>
            <person name="Lapidus A."/>
            <person name="Glavina del Rio T."/>
            <person name="Dalin E."/>
            <person name="Tice H."/>
            <person name="Bruce D."/>
            <person name="Goodwin L."/>
            <person name="Pitluck S."/>
            <person name="Schmutz J."/>
            <person name="Larimer F."/>
            <person name="Land M."/>
            <person name="Hauser L."/>
            <person name="Kyrpides N."/>
            <person name="Ovchinnikova G."/>
            <person name="Zhao F."/>
            <person name="Li T."/>
            <person name="Liu Z."/>
            <person name="Overmann J."/>
            <person name="Bryant D.A."/>
            <person name="Richardson P."/>
        </authorList>
    </citation>
    <scope>NUCLEOTIDE SEQUENCE [LARGE SCALE GENOMIC DNA]</scope>
    <source>
        <strain>DSM 245 / NBRC 103803 / 6330</strain>
    </source>
</reference>
<organism>
    <name type="scientific">Chlorobium limicola (strain DSM 245 / NBRC 103803 / 6330)</name>
    <dbReference type="NCBI Taxonomy" id="290315"/>
    <lineage>
        <taxon>Bacteria</taxon>
        <taxon>Pseudomonadati</taxon>
        <taxon>Chlorobiota</taxon>
        <taxon>Chlorobiia</taxon>
        <taxon>Chlorobiales</taxon>
        <taxon>Chlorobiaceae</taxon>
        <taxon>Chlorobium/Pelodictyon group</taxon>
        <taxon>Chlorobium</taxon>
    </lineage>
</organism>
<comment type="function">
    <text evidence="1">Catalyzes the attachment of proline to tRNA(Pro) in a two-step reaction: proline is first activated by ATP to form Pro-AMP and then transferred to the acceptor end of tRNA(Pro).</text>
</comment>
<comment type="catalytic activity">
    <reaction evidence="1">
        <text>tRNA(Pro) + L-proline + ATP = L-prolyl-tRNA(Pro) + AMP + diphosphate</text>
        <dbReference type="Rhea" id="RHEA:14305"/>
        <dbReference type="Rhea" id="RHEA-COMP:9700"/>
        <dbReference type="Rhea" id="RHEA-COMP:9702"/>
        <dbReference type="ChEBI" id="CHEBI:30616"/>
        <dbReference type="ChEBI" id="CHEBI:33019"/>
        <dbReference type="ChEBI" id="CHEBI:60039"/>
        <dbReference type="ChEBI" id="CHEBI:78442"/>
        <dbReference type="ChEBI" id="CHEBI:78532"/>
        <dbReference type="ChEBI" id="CHEBI:456215"/>
        <dbReference type="EC" id="6.1.1.15"/>
    </reaction>
</comment>
<comment type="subunit">
    <text evidence="1">Homodimer.</text>
</comment>
<comment type="subcellular location">
    <subcellularLocation>
        <location evidence="1">Cytoplasm</location>
    </subcellularLocation>
</comment>
<comment type="domain">
    <text evidence="1">Consists of three domains: the N-terminal catalytic domain, the anticodon-binding domain and the C-terminal extension.</text>
</comment>
<comment type="similarity">
    <text evidence="1">Belongs to the class-II aminoacyl-tRNA synthetase family. ProS type 3 subfamily.</text>
</comment>
<gene>
    <name evidence="1" type="primary">proS</name>
    <name type="ordered locus">Clim_1696</name>
</gene>
<feature type="chain" id="PRO_1000215550" description="Proline--tRNA ligase">
    <location>
        <begin position="1"/>
        <end position="481"/>
    </location>
</feature>
<proteinExistence type="inferred from homology"/>
<dbReference type="EC" id="6.1.1.15" evidence="1"/>
<dbReference type="EMBL" id="CP001097">
    <property type="protein sequence ID" value="ACD90738.1"/>
    <property type="molecule type" value="Genomic_DNA"/>
</dbReference>
<dbReference type="RefSeq" id="WP_012466611.1">
    <property type="nucleotide sequence ID" value="NC_010803.1"/>
</dbReference>
<dbReference type="SMR" id="B3EE36"/>
<dbReference type="STRING" id="290315.Clim_1696"/>
<dbReference type="KEGG" id="cli:Clim_1696"/>
<dbReference type="eggNOG" id="COG0442">
    <property type="taxonomic scope" value="Bacteria"/>
</dbReference>
<dbReference type="HOGENOM" id="CLU_001882_4_2_10"/>
<dbReference type="OrthoDB" id="9809052at2"/>
<dbReference type="Proteomes" id="UP000008841">
    <property type="component" value="Chromosome"/>
</dbReference>
<dbReference type="GO" id="GO:0017101">
    <property type="term" value="C:aminoacyl-tRNA synthetase multienzyme complex"/>
    <property type="evidence" value="ECO:0007669"/>
    <property type="project" value="TreeGrafter"/>
</dbReference>
<dbReference type="GO" id="GO:0005737">
    <property type="term" value="C:cytoplasm"/>
    <property type="evidence" value="ECO:0007669"/>
    <property type="project" value="UniProtKB-SubCell"/>
</dbReference>
<dbReference type="GO" id="GO:0005524">
    <property type="term" value="F:ATP binding"/>
    <property type="evidence" value="ECO:0007669"/>
    <property type="project" value="UniProtKB-UniRule"/>
</dbReference>
<dbReference type="GO" id="GO:0004827">
    <property type="term" value="F:proline-tRNA ligase activity"/>
    <property type="evidence" value="ECO:0007669"/>
    <property type="project" value="UniProtKB-UniRule"/>
</dbReference>
<dbReference type="GO" id="GO:0006433">
    <property type="term" value="P:prolyl-tRNA aminoacylation"/>
    <property type="evidence" value="ECO:0007669"/>
    <property type="project" value="UniProtKB-UniRule"/>
</dbReference>
<dbReference type="CDD" id="cd00862">
    <property type="entry name" value="ProRS_anticodon_zinc"/>
    <property type="match status" value="1"/>
</dbReference>
<dbReference type="CDD" id="cd00778">
    <property type="entry name" value="ProRS_core_arch_euk"/>
    <property type="match status" value="1"/>
</dbReference>
<dbReference type="FunFam" id="3.30.930.10:FF:000023">
    <property type="entry name" value="Proline--tRNA ligase"/>
    <property type="match status" value="1"/>
</dbReference>
<dbReference type="Gene3D" id="3.40.50.800">
    <property type="entry name" value="Anticodon-binding domain"/>
    <property type="match status" value="1"/>
</dbReference>
<dbReference type="Gene3D" id="3.30.930.10">
    <property type="entry name" value="Bira Bifunctional Protein, Domain 2"/>
    <property type="match status" value="1"/>
</dbReference>
<dbReference type="Gene3D" id="3.30.110.30">
    <property type="entry name" value="C-terminal domain of ProRS"/>
    <property type="match status" value="1"/>
</dbReference>
<dbReference type="HAMAP" id="MF_01571">
    <property type="entry name" value="Pro_tRNA_synth_type3"/>
    <property type="match status" value="1"/>
</dbReference>
<dbReference type="InterPro" id="IPR002314">
    <property type="entry name" value="aa-tRNA-synt_IIb"/>
</dbReference>
<dbReference type="InterPro" id="IPR006195">
    <property type="entry name" value="aa-tRNA-synth_II"/>
</dbReference>
<dbReference type="InterPro" id="IPR045864">
    <property type="entry name" value="aa-tRNA-synth_II/BPL/LPL"/>
</dbReference>
<dbReference type="InterPro" id="IPR004154">
    <property type="entry name" value="Anticodon-bd"/>
</dbReference>
<dbReference type="InterPro" id="IPR036621">
    <property type="entry name" value="Anticodon-bd_dom_sf"/>
</dbReference>
<dbReference type="InterPro" id="IPR002316">
    <property type="entry name" value="Pro-tRNA-ligase_IIa"/>
</dbReference>
<dbReference type="InterPro" id="IPR004499">
    <property type="entry name" value="Pro-tRNA-ligase_IIa_arc-type"/>
</dbReference>
<dbReference type="InterPro" id="IPR016061">
    <property type="entry name" value="Pro-tRNA_ligase_II_C"/>
</dbReference>
<dbReference type="InterPro" id="IPR017449">
    <property type="entry name" value="Pro-tRNA_synth_II"/>
</dbReference>
<dbReference type="InterPro" id="IPR033721">
    <property type="entry name" value="ProRS_core_arch_euk"/>
</dbReference>
<dbReference type="NCBIfam" id="TIGR00408">
    <property type="entry name" value="proS_fam_I"/>
    <property type="match status" value="1"/>
</dbReference>
<dbReference type="PANTHER" id="PTHR43382:SF2">
    <property type="entry name" value="BIFUNCTIONAL GLUTAMATE_PROLINE--TRNA LIGASE"/>
    <property type="match status" value="1"/>
</dbReference>
<dbReference type="PANTHER" id="PTHR43382">
    <property type="entry name" value="PROLYL-TRNA SYNTHETASE"/>
    <property type="match status" value="1"/>
</dbReference>
<dbReference type="Pfam" id="PF03129">
    <property type="entry name" value="HGTP_anticodon"/>
    <property type="match status" value="1"/>
</dbReference>
<dbReference type="Pfam" id="PF09180">
    <property type="entry name" value="ProRS-C_1"/>
    <property type="match status" value="1"/>
</dbReference>
<dbReference type="Pfam" id="PF00587">
    <property type="entry name" value="tRNA-synt_2b"/>
    <property type="match status" value="1"/>
</dbReference>
<dbReference type="PRINTS" id="PR01046">
    <property type="entry name" value="TRNASYNTHPRO"/>
</dbReference>
<dbReference type="SMART" id="SM00946">
    <property type="entry name" value="ProRS-C_1"/>
    <property type="match status" value="1"/>
</dbReference>
<dbReference type="SUPFAM" id="SSF64586">
    <property type="entry name" value="C-terminal domain of ProRS"/>
    <property type="match status" value="1"/>
</dbReference>
<dbReference type="SUPFAM" id="SSF52954">
    <property type="entry name" value="Class II aaRS ABD-related"/>
    <property type="match status" value="1"/>
</dbReference>
<dbReference type="SUPFAM" id="SSF55681">
    <property type="entry name" value="Class II aaRS and biotin synthetases"/>
    <property type="match status" value="1"/>
</dbReference>
<dbReference type="PROSITE" id="PS50862">
    <property type="entry name" value="AA_TRNA_LIGASE_II"/>
    <property type="match status" value="1"/>
</dbReference>
<keyword id="KW-0030">Aminoacyl-tRNA synthetase</keyword>
<keyword id="KW-0067">ATP-binding</keyword>
<keyword id="KW-0963">Cytoplasm</keyword>
<keyword id="KW-0436">Ligase</keyword>
<keyword id="KW-0547">Nucleotide-binding</keyword>
<keyword id="KW-0648">Protein biosynthesis</keyword>
<protein>
    <recommendedName>
        <fullName evidence="1">Proline--tRNA ligase</fullName>
        <ecNumber evidence="1">6.1.1.15</ecNumber>
    </recommendedName>
    <alternativeName>
        <fullName evidence="1">Prolyl-tRNA synthetase</fullName>
        <shortName evidence="1">ProRS</shortName>
    </alternativeName>
</protein>
<evidence type="ECO:0000255" key="1">
    <source>
        <dbReference type="HAMAP-Rule" id="MF_01571"/>
    </source>
</evidence>
<accession>B3EE36</accession>